<accession>Q1QWP1</accession>
<sequence length="94" mass="10548">MSIDFVVHDADDAVGVVVVEGVEAGQMLTGWVMDQDRTLQFEVKDAIPIGHKLAIRDLAEDETVIKYSVDIGRVVQSIRQGEHVHVHNVKTKRW</sequence>
<organism>
    <name type="scientific">Chromohalobacter salexigens (strain ATCC BAA-138 / DSM 3043 / CIP 106854 / NCIMB 13768 / 1H11)</name>
    <dbReference type="NCBI Taxonomy" id="290398"/>
    <lineage>
        <taxon>Bacteria</taxon>
        <taxon>Pseudomonadati</taxon>
        <taxon>Pseudomonadota</taxon>
        <taxon>Gammaproteobacteria</taxon>
        <taxon>Oceanospirillales</taxon>
        <taxon>Halomonadaceae</taxon>
        <taxon>Chromohalobacter</taxon>
    </lineage>
</organism>
<proteinExistence type="evidence at protein level"/>
<protein>
    <recommendedName>
        <fullName>(2R)-sulfolactate sulfo-lyase subunit alpha</fullName>
        <ecNumber evidence="2">4.4.1.24</ecNumber>
    </recommendedName>
    <alternativeName>
        <fullName>Sulfolactate sulfo-lyase A</fullName>
    </alternativeName>
</protein>
<reference key="1">
    <citation type="journal article" date="2011" name="Stand. Genomic Sci.">
        <title>Complete genome sequence of the halophilic and highly halotolerant Chromohalobacter salexigens type strain (1H11(T)).</title>
        <authorList>
            <person name="Copeland A."/>
            <person name="O'Connor K."/>
            <person name="Lucas S."/>
            <person name="Lapidus A."/>
            <person name="Berry K.W."/>
            <person name="Detter J.C."/>
            <person name="Del Rio T.G."/>
            <person name="Hammon N."/>
            <person name="Dalin E."/>
            <person name="Tice H."/>
            <person name="Pitluck S."/>
            <person name="Bruce D."/>
            <person name="Goodwin L."/>
            <person name="Han C."/>
            <person name="Tapia R."/>
            <person name="Saunders E."/>
            <person name="Schmutz J."/>
            <person name="Brettin T."/>
            <person name="Larimer F."/>
            <person name="Land M."/>
            <person name="Hauser L."/>
            <person name="Vargas C."/>
            <person name="Nieto J.J."/>
            <person name="Kyrpides N.C."/>
            <person name="Ivanova N."/>
            <person name="Goker M."/>
            <person name="Klenk H.P."/>
            <person name="Csonka L.N."/>
            <person name="Woyke T."/>
        </authorList>
    </citation>
    <scope>NUCLEOTIDE SEQUENCE [LARGE SCALE GENOMIC DNA]</scope>
    <source>
        <strain>ATCC BAA-138 / DSM 3043 / CIP 106854 / NCIMB 13768 / 1H11</strain>
    </source>
</reference>
<reference key="2">
    <citation type="journal article" date="2010" name="Microbiology">
        <title>Racemase activity effected by two dehydrogenases in sulfolactate degradation by Chromohalobacter salexigens: purification of (S)-sulfolactate dehydrogenase.</title>
        <authorList>
            <person name="Denger K."/>
            <person name="Cook A.M."/>
        </authorList>
    </citation>
    <scope>FUNCTION</scope>
    <scope>CATALYTIC ACTIVITY</scope>
    <scope>SUBUNIT</scope>
    <source>
        <strain>ATCC BAA-138 / DSM 3043 / CIP 106854 / NCIMB 13768 / 1H11</strain>
    </source>
</reference>
<dbReference type="EC" id="4.4.1.24" evidence="2"/>
<dbReference type="EMBL" id="CP000285">
    <property type="protein sequence ID" value="ABE59117.1"/>
    <property type="molecule type" value="Genomic_DNA"/>
</dbReference>
<dbReference type="RefSeq" id="WP_011507063.1">
    <property type="nucleotide sequence ID" value="NC_007963.1"/>
</dbReference>
<dbReference type="SMR" id="Q1QWP1"/>
<dbReference type="STRING" id="290398.Csal_1765"/>
<dbReference type="GeneID" id="95334477"/>
<dbReference type="KEGG" id="csa:Csal_1765"/>
<dbReference type="eggNOG" id="COG2721">
    <property type="taxonomic scope" value="Bacteria"/>
</dbReference>
<dbReference type="HOGENOM" id="CLU_084161_2_0_6"/>
<dbReference type="OrthoDB" id="9804574at2"/>
<dbReference type="BioCyc" id="MetaCyc:MONOMER-15869"/>
<dbReference type="Proteomes" id="UP000000239">
    <property type="component" value="Chromosome"/>
</dbReference>
<dbReference type="GO" id="GO:0005737">
    <property type="term" value="C:cytoplasm"/>
    <property type="evidence" value="ECO:0007669"/>
    <property type="project" value="UniProtKB-SubCell"/>
</dbReference>
<dbReference type="GO" id="GO:0034010">
    <property type="term" value="F:sulfolactate sulfo-lyase activity"/>
    <property type="evidence" value="ECO:0007669"/>
    <property type="project" value="UniProtKB-EC"/>
</dbReference>
<dbReference type="CDD" id="cd11613">
    <property type="entry name" value="SAF_AH_GD"/>
    <property type="match status" value="1"/>
</dbReference>
<dbReference type="Gene3D" id="2.30.130.110">
    <property type="match status" value="1"/>
</dbReference>
<dbReference type="InterPro" id="IPR013974">
    <property type="entry name" value="SAF"/>
</dbReference>
<dbReference type="InterPro" id="IPR044144">
    <property type="entry name" value="UxaA/GarD_SAF"/>
</dbReference>
<dbReference type="SMART" id="SM00858">
    <property type="entry name" value="SAF"/>
    <property type="match status" value="1"/>
</dbReference>
<name>SUYA_CHRSD</name>
<comment type="function">
    <text evidence="2">Together with SuyB, desulfonates sulfolactate to pyruvate and sulfite.</text>
</comment>
<comment type="catalytic activity">
    <reaction evidence="2">
        <text>(2R)-3-sulfolactate = sulfite + pyruvate + H(+)</text>
        <dbReference type="Rhea" id="RHEA:21428"/>
        <dbReference type="ChEBI" id="CHEBI:15361"/>
        <dbReference type="ChEBI" id="CHEBI:15378"/>
        <dbReference type="ChEBI" id="CHEBI:17359"/>
        <dbReference type="ChEBI" id="CHEBI:58738"/>
        <dbReference type="EC" id="4.4.1.24"/>
    </reaction>
</comment>
<comment type="subunit">
    <text evidence="3">(2R)-sulfolactate sulfo-lyase is composed of a SuyA and a SuyB subunit.</text>
</comment>
<comment type="subcellular location">
    <subcellularLocation>
        <location evidence="1">Cytoplasm</location>
    </subcellularLocation>
</comment>
<feature type="chain" id="PRO_0000418741" description="(2R)-sulfolactate sulfo-lyase subunit alpha">
    <location>
        <begin position="1"/>
        <end position="94"/>
    </location>
</feature>
<feature type="domain" description="AFP-like">
    <location>
        <begin position="16"/>
        <end position="90"/>
    </location>
</feature>
<keyword id="KW-0963">Cytoplasm</keyword>
<keyword id="KW-0456">Lyase</keyword>
<keyword id="KW-1185">Reference proteome</keyword>
<evidence type="ECO:0000250" key="1"/>
<evidence type="ECO:0000269" key="2">
    <source>
    </source>
</evidence>
<evidence type="ECO:0000305" key="3">
    <source>
    </source>
</evidence>
<gene>
    <name type="primary">suyA</name>
    <name type="ordered locus">Csal_1765</name>
</gene>